<evidence type="ECO:0000255" key="1">
    <source>
        <dbReference type="HAMAP-Rule" id="MF_00111"/>
    </source>
</evidence>
<proteinExistence type="inferred from homology"/>
<comment type="function">
    <text evidence="1">Cell wall formation. Adds enolpyruvyl to UDP-N-acetylglucosamine.</text>
</comment>
<comment type="catalytic activity">
    <reaction evidence="1">
        <text>phosphoenolpyruvate + UDP-N-acetyl-alpha-D-glucosamine = UDP-N-acetyl-3-O-(1-carboxyvinyl)-alpha-D-glucosamine + phosphate</text>
        <dbReference type="Rhea" id="RHEA:18681"/>
        <dbReference type="ChEBI" id="CHEBI:43474"/>
        <dbReference type="ChEBI" id="CHEBI:57705"/>
        <dbReference type="ChEBI" id="CHEBI:58702"/>
        <dbReference type="ChEBI" id="CHEBI:68483"/>
        <dbReference type="EC" id="2.5.1.7"/>
    </reaction>
</comment>
<comment type="pathway">
    <text evidence="1">Cell wall biogenesis; peptidoglycan biosynthesis.</text>
</comment>
<comment type="subcellular location">
    <subcellularLocation>
        <location evidence="1">Cytoplasm</location>
    </subcellularLocation>
</comment>
<comment type="similarity">
    <text evidence="1">Belongs to the EPSP synthase family. MurA subfamily.</text>
</comment>
<accession>Q2P682</accession>
<protein>
    <recommendedName>
        <fullName evidence="1">UDP-N-acetylglucosamine 1-carboxyvinyltransferase</fullName>
        <ecNumber evidence="1">2.5.1.7</ecNumber>
    </recommendedName>
    <alternativeName>
        <fullName evidence="1">Enoylpyruvate transferase</fullName>
    </alternativeName>
    <alternativeName>
        <fullName evidence="1">UDP-N-acetylglucosamine enolpyruvyl transferase</fullName>
        <shortName evidence="1">EPT</shortName>
    </alternativeName>
</protein>
<keyword id="KW-0131">Cell cycle</keyword>
<keyword id="KW-0132">Cell division</keyword>
<keyword id="KW-0133">Cell shape</keyword>
<keyword id="KW-0961">Cell wall biogenesis/degradation</keyword>
<keyword id="KW-0963">Cytoplasm</keyword>
<keyword id="KW-0573">Peptidoglycan synthesis</keyword>
<keyword id="KW-0670">Pyruvate</keyword>
<keyword id="KW-0808">Transferase</keyword>
<reference key="1">
    <citation type="journal article" date="2005" name="Jpn. Agric. Res. Q.">
        <title>Genome sequence of Xanthomonas oryzae pv. oryzae suggests contribution of large numbers of effector genes and insertion sequences to its race diversity.</title>
        <authorList>
            <person name="Ochiai H."/>
            <person name="Inoue Y."/>
            <person name="Takeya M."/>
            <person name="Sasaki A."/>
            <person name="Kaku H."/>
        </authorList>
    </citation>
    <scope>NUCLEOTIDE SEQUENCE [LARGE SCALE GENOMIC DNA]</scope>
    <source>
        <strain>MAFF 311018</strain>
    </source>
</reference>
<gene>
    <name evidence="1" type="primary">murA</name>
    <name type="ordered locus">XOO1190</name>
</gene>
<dbReference type="EC" id="2.5.1.7" evidence="1"/>
<dbReference type="EMBL" id="AP008229">
    <property type="protein sequence ID" value="BAE67945.1"/>
    <property type="molecule type" value="Genomic_DNA"/>
</dbReference>
<dbReference type="RefSeq" id="WP_011258110.1">
    <property type="nucleotide sequence ID" value="NC_007705.1"/>
</dbReference>
<dbReference type="SMR" id="Q2P682"/>
<dbReference type="KEGG" id="xom:XOO1190"/>
<dbReference type="HOGENOM" id="CLU_027387_0_0_6"/>
<dbReference type="UniPathway" id="UPA00219"/>
<dbReference type="GO" id="GO:0005737">
    <property type="term" value="C:cytoplasm"/>
    <property type="evidence" value="ECO:0007669"/>
    <property type="project" value="UniProtKB-SubCell"/>
</dbReference>
<dbReference type="GO" id="GO:0008760">
    <property type="term" value="F:UDP-N-acetylglucosamine 1-carboxyvinyltransferase activity"/>
    <property type="evidence" value="ECO:0007669"/>
    <property type="project" value="UniProtKB-UniRule"/>
</dbReference>
<dbReference type="GO" id="GO:0051301">
    <property type="term" value="P:cell division"/>
    <property type="evidence" value="ECO:0007669"/>
    <property type="project" value="UniProtKB-KW"/>
</dbReference>
<dbReference type="GO" id="GO:0071555">
    <property type="term" value="P:cell wall organization"/>
    <property type="evidence" value="ECO:0007669"/>
    <property type="project" value="UniProtKB-KW"/>
</dbReference>
<dbReference type="GO" id="GO:0009252">
    <property type="term" value="P:peptidoglycan biosynthetic process"/>
    <property type="evidence" value="ECO:0007669"/>
    <property type="project" value="UniProtKB-UniRule"/>
</dbReference>
<dbReference type="GO" id="GO:0008360">
    <property type="term" value="P:regulation of cell shape"/>
    <property type="evidence" value="ECO:0007669"/>
    <property type="project" value="UniProtKB-KW"/>
</dbReference>
<dbReference type="GO" id="GO:0019277">
    <property type="term" value="P:UDP-N-acetylgalactosamine biosynthetic process"/>
    <property type="evidence" value="ECO:0007669"/>
    <property type="project" value="InterPro"/>
</dbReference>
<dbReference type="CDD" id="cd01555">
    <property type="entry name" value="UdpNAET"/>
    <property type="match status" value="1"/>
</dbReference>
<dbReference type="FunFam" id="3.65.10.10:FF:000002">
    <property type="entry name" value="UDP-N-acetylglucosamine 1-carboxyvinyltransferase"/>
    <property type="match status" value="1"/>
</dbReference>
<dbReference type="Gene3D" id="3.65.10.10">
    <property type="entry name" value="Enolpyruvate transferase domain"/>
    <property type="match status" value="2"/>
</dbReference>
<dbReference type="HAMAP" id="MF_00111">
    <property type="entry name" value="MurA"/>
    <property type="match status" value="1"/>
</dbReference>
<dbReference type="InterPro" id="IPR001986">
    <property type="entry name" value="Enolpyruvate_Tfrase_dom"/>
</dbReference>
<dbReference type="InterPro" id="IPR036968">
    <property type="entry name" value="Enolpyruvate_Tfrase_sf"/>
</dbReference>
<dbReference type="InterPro" id="IPR050068">
    <property type="entry name" value="MurA_subfamily"/>
</dbReference>
<dbReference type="InterPro" id="IPR013792">
    <property type="entry name" value="RNA3'P_cycl/enolpyr_Trfase_a/b"/>
</dbReference>
<dbReference type="InterPro" id="IPR005750">
    <property type="entry name" value="UDP_GlcNAc_COvinyl_MurA"/>
</dbReference>
<dbReference type="NCBIfam" id="TIGR01072">
    <property type="entry name" value="murA"/>
    <property type="match status" value="1"/>
</dbReference>
<dbReference type="NCBIfam" id="NF006873">
    <property type="entry name" value="PRK09369.1"/>
    <property type="match status" value="1"/>
</dbReference>
<dbReference type="PANTHER" id="PTHR43783">
    <property type="entry name" value="UDP-N-ACETYLGLUCOSAMINE 1-CARBOXYVINYLTRANSFERASE"/>
    <property type="match status" value="1"/>
</dbReference>
<dbReference type="PANTHER" id="PTHR43783:SF1">
    <property type="entry name" value="UDP-N-ACETYLGLUCOSAMINE 1-CARBOXYVINYLTRANSFERASE"/>
    <property type="match status" value="1"/>
</dbReference>
<dbReference type="Pfam" id="PF00275">
    <property type="entry name" value="EPSP_synthase"/>
    <property type="match status" value="1"/>
</dbReference>
<dbReference type="SUPFAM" id="SSF55205">
    <property type="entry name" value="EPT/RTPC-like"/>
    <property type="match status" value="1"/>
</dbReference>
<sequence length="424" mass="44420">MAKIVVTGGQALQGEVNISGAKNAVLPILCATLLADAPVQISNVPHLHDVITMVKLLSELGAEVTIDEGTLAKGRSILVDPRSVTHQIAPYELVKTMRASILVLGPLLARYGTAEVSLPGGCAIGSRPVDQHIKGLQALGAEISVENGYIKATSHGRLKGGRYVFDMVSVTGTENVLMAAVLAEGTTVLENAAMEPEVTDLADCMIALGAQIEGAGTPRIVVQGVQRLGGGHHAVLPDRIETGTFLVAAAMTGGSVTVRRARPETLDAMLDKLTEAGATITTTADSITLDMQGKRPRAVSLTTAPYPAFPTDMQAQFMALNCVADGVGVINETIFENRFMHVNELLRLGADIQVEGHTAIVRGAARLSGAPVMATDLRASASLILAGLVADGDTTIDRIYHLDRGYENIEEKLGALGATIQRTA</sequence>
<name>MURA_XANOM</name>
<organism>
    <name type="scientific">Xanthomonas oryzae pv. oryzae (strain MAFF 311018)</name>
    <dbReference type="NCBI Taxonomy" id="342109"/>
    <lineage>
        <taxon>Bacteria</taxon>
        <taxon>Pseudomonadati</taxon>
        <taxon>Pseudomonadota</taxon>
        <taxon>Gammaproteobacteria</taxon>
        <taxon>Lysobacterales</taxon>
        <taxon>Lysobacteraceae</taxon>
        <taxon>Xanthomonas</taxon>
    </lineage>
</organism>
<feature type="chain" id="PRO_1000023122" description="UDP-N-acetylglucosamine 1-carboxyvinyltransferase">
    <location>
        <begin position="1"/>
        <end position="424"/>
    </location>
</feature>
<feature type="active site" description="Proton donor" evidence="1">
    <location>
        <position position="122"/>
    </location>
</feature>
<feature type="binding site" evidence="1">
    <location>
        <begin position="22"/>
        <end position="23"/>
    </location>
    <ligand>
        <name>phosphoenolpyruvate</name>
        <dbReference type="ChEBI" id="CHEBI:58702"/>
    </ligand>
</feature>
<feature type="binding site" evidence="1">
    <location>
        <position position="98"/>
    </location>
    <ligand>
        <name>UDP-N-acetyl-alpha-D-glucosamine</name>
        <dbReference type="ChEBI" id="CHEBI:57705"/>
    </ligand>
</feature>
<feature type="binding site" evidence="1">
    <location>
        <begin position="127"/>
        <end position="131"/>
    </location>
    <ligand>
        <name>UDP-N-acetyl-alpha-D-glucosamine</name>
        <dbReference type="ChEBI" id="CHEBI:57705"/>
    </ligand>
</feature>
<feature type="binding site" evidence="1">
    <location>
        <position position="312"/>
    </location>
    <ligand>
        <name>UDP-N-acetyl-alpha-D-glucosamine</name>
        <dbReference type="ChEBI" id="CHEBI:57705"/>
    </ligand>
</feature>
<feature type="binding site" evidence="1">
    <location>
        <position position="334"/>
    </location>
    <ligand>
        <name>UDP-N-acetyl-alpha-D-glucosamine</name>
        <dbReference type="ChEBI" id="CHEBI:57705"/>
    </ligand>
</feature>
<feature type="modified residue" description="2-(S-cysteinyl)pyruvic acid O-phosphothioketal" evidence="1">
    <location>
        <position position="122"/>
    </location>
</feature>